<organism>
    <name type="scientific">Mycolicibacterium gilvum (strain PYR-GCK)</name>
    <name type="common">Mycobacterium gilvum (strain PYR-GCK)</name>
    <dbReference type="NCBI Taxonomy" id="350054"/>
    <lineage>
        <taxon>Bacteria</taxon>
        <taxon>Bacillati</taxon>
        <taxon>Actinomycetota</taxon>
        <taxon>Actinomycetes</taxon>
        <taxon>Mycobacteriales</taxon>
        <taxon>Mycobacteriaceae</taxon>
        <taxon>Mycolicibacterium</taxon>
    </lineage>
</organism>
<sequence>MSVQAPSVPDLRQQVHDAARRARSAARGLATLSTDTKDRALRTAADHVLMNTRAILEANEADLDTARSSGTPEAMLDRLALTPARVEGIADGLRQVAGLPDPVGEVLRGRTLPNGLQLRQQRVPLGVVGIVYEGRPNVTVDAFGLTLKSGNAVLLRGSSSAARSNAALVDALRAALATELLDVDAVQLLPSADRASVTHLIQARGLVDVVIPRGGAGLIDAVVRDAQVPTIETGVGNCHVYVHSSADLDTAESIVLNAKTRRPSVCNAAESLLIDAAVADVAVPRLTDALQAAGVTVHIDPTEDELRAEFLSMDIALAIVDGVDGAISHINEYGTGHTEAIVTTDLAAAQRFTERVDAAAVMVNASTAFTDGEQFGFGAEIGISTQKLHARGPMGLPELTSTKWIVWGDGHTRPA</sequence>
<reference key="1">
    <citation type="submission" date="2007-04" db="EMBL/GenBank/DDBJ databases">
        <title>Complete sequence of chromosome of Mycobacterium gilvum PYR-GCK.</title>
        <authorList>
            <consortium name="US DOE Joint Genome Institute"/>
            <person name="Copeland A."/>
            <person name="Lucas S."/>
            <person name="Lapidus A."/>
            <person name="Barry K."/>
            <person name="Detter J.C."/>
            <person name="Glavina del Rio T."/>
            <person name="Hammon N."/>
            <person name="Israni S."/>
            <person name="Dalin E."/>
            <person name="Tice H."/>
            <person name="Pitluck S."/>
            <person name="Chain P."/>
            <person name="Malfatti S."/>
            <person name="Shin M."/>
            <person name="Vergez L."/>
            <person name="Schmutz J."/>
            <person name="Larimer F."/>
            <person name="Land M."/>
            <person name="Hauser L."/>
            <person name="Kyrpides N."/>
            <person name="Mikhailova N."/>
            <person name="Miller C."/>
            <person name="Richardson P."/>
        </authorList>
    </citation>
    <scope>NUCLEOTIDE SEQUENCE [LARGE SCALE GENOMIC DNA]</scope>
    <source>
        <strain>PYR-GCK</strain>
    </source>
</reference>
<accession>A4T2I0</accession>
<protein>
    <recommendedName>
        <fullName evidence="1">Gamma-glutamyl phosphate reductase</fullName>
        <shortName evidence="1">GPR</shortName>
        <ecNumber evidence="1">1.2.1.41</ecNumber>
    </recommendedName>
    <alternativeName>
        <fullName evidence="1">Glutamate-5-semialdehyde dehydrogenase</fullName>
    </alternativeName>
    <alternativeName>
        <fullName evidence="1">Glutamyl-gamma-semialdehyde dehydrogenase</fullName>
        <shortName evidence="1">GSA dehydrogenase</shortName>
    </alternativeName>
</protein>
<proteinExistence type="inferred from homology"/>
<name>PROA_MYCGI</name>
<comment type="function">
    <text evidence="1">Catalyzes the NADPH-dependent reduction of L-glutamate 5-phosphate into L-glutamate 5-semialdehyde and phosphate. The product spontaneously undergoes cyclization to form 1-pyrroline-5-carboxylate.</text>
</comment>
<comment type="catalytic activity">
    <reaction evidence="1">
        <text>L-glutamate 5-semialdehyde + phosphate + NADP(+) = L-glutamyl 5-phosphate + NADPH + H(+)</text>
        <dbReference type="Rhea" id="RHEA:19541"/>
        <dbReference type="ChEBI" id="CHEBI:15378"/>
        <dbReference type="ChEBI" id="CHEBI:43474"/>
        <dbReference type="ChEBI" id="CHEBI:57783"/>
        <dbReference type="ChEBI" id="CHEBI:58066"/>
        <dbReference type="ChEBI" id="CHEBI:58274"/>
        <dbReference type="ChEBI" id="CHEBI:58349"/>
        <dbReference type="EC" id="1.2.1.41"/>
    </reaction>
</comment>
<comment type="pathway">
    <text evidence="1">Amino-acid biosynthesis; L-proline biosynthesis; L-glutamate 5-semialdehyde from L-glutamate: step 2/2.</text>
</comment>
<comment type="subcellular location">
    <subcellularLocation>
        <location evidence="1">Cytoplasm</location>
    </subcellularLocation>
</comment>
<comment type="similarity">
    <text evidence="1">Belongs to the gamma-glutamyl phosphate reductase family.</text>
</comment>
<feature type="chain" id="PRO_1000080487" description="Gamma-glutamyl phosphate reductase">
    <location>
        <begin position="1"/>
        <end position="415"/>
    </location>
</feature>
<dbReference type="EC" id="1.2.1.41" evidence="1"/>
<dbReference type="EMBL" id="CP000656">
    <property type="protein sequence ID" value="ABP45121.1"/>
    <property type="molecule type" value="Genomic_DNA"/>
</dbReference>
<dbReference type="SMR" id="A4T2I0"/>
<dbReference type="STRING" id="350054.Mflv_2644"/>
<dbReference type="KEGG" id="mgi:Mflv_2644"/>
<dbReference type="eggNOG" id="COG0014">
    <property type="taxonomic scope" value="Bacteria"/>
</dbReference>
<dbReference type="HOGENOM" id="CLU_030231_0_0_11"/>
<dbReference type="OrthoDB" id="9809970at2"/>
<dbReference type="UniPathway" id="UPA00098">
    <property type="reaction ID" value="UER00360"/>
</dbReference>
<dbReference type="GO" id="GO:0005737">
    <property type="term" value="C:cytoplasm"/>
    <property type="evidence" value="ECO:0007669"/>
    <property type="project" value="UniProtKB-SubCell"/>
</dbReference>
<dbReference type="GO" id="GO:0004350">
    <property type="term" value="F:glutamate-5-semialdehyde dehydrogenase activity"/>
    <property type="evidence" value="ECO:0007669"/>
    <property type="project" value="UniProtKB-UniRule"/>
</dbReference>
<dbReference type="GO" id="GO:0050661">
    <property type="term" value="F:NADP binding"/>
    <property type="evidence" value="ECO:0007669"/>
    <property type="project" value="InterPro"/>
</dbReference>
<dbReference type="GO" id="GO:0055129">
    <property type="term" value="P:L-proline biosynthetic process"/>
    <property type="evidence" value="ECO:0007669"/>
    <property type="project" value="UniProtKB-UniRule"/>
</dbReference>
<dbReference type="CDD" id="cd07079">
    <property type="entry name" value="ALDH_F18-19_ProA-GPR"/>
    <property type="match status" value="1"/>
</dbReference>
<dbReference type="Gene3D" id="3.40.605.10">
    <property type="entry name" value="Aldehyde Dehydrogenase, Chain A, domain 1"/>
    <property type="match status" value="1"/>
</dbReference>
<dbReference type="Gene3D" id="3.40.309.10">
    <property type="entry name" value="Aldehyde Dehydrogenase, Chain A, domain 2"/>
    <property type="match status" value="1"/>
</dbReference>
<dbReference type="HAMAP" id="MF_00412">
    <property type="entry name" value="ProA"/>
    <property type="match status" value="1"/>
</dbReference>
<dbReference type="InterPro" id="IPR016161">
    <property type="entry name" value="Ald_DH/histidinol_DH"/>
</dbReference>
<dbReference type="InterPro" id="IPR016163">
    <property type="entry name" value="Ald_DH_C"/>
</dbReference>
<dbReference type="InterPro" id="IPR016162">
    <property type="entry name" value="Ald_DH_N"/>
</dbReference>
<dbReference type="InterPro" id="IPR015590">
    <property type="entry name" value="Aldehyde_DH_dom"/>
</dbReference>
<dbReference type="InterPro" id="IPR020593">
    <property type="entry name" value="G-glutamylP_reductase_CS"/>
</dbReference>
<dbReference type="InterPro" id="IPR012134">
    <property type="entry name" value="Glu-5-SA_DH"/>
</dbReference>
<dbReference type="InterPro" id="IPR000965">
    <property type="entry name" value="GPR_dom"/>
</dbReference>
<dbReference type="NCBIfam" id="NF001221">
    <property type="entry name" value="PRK00197.1"/>
    <property type="match status" value="1"/>
</dbReference>
<dbReference type="NCBIfam" id="TIGR00407">
    <property type="entry name" value="proA"/>
    <property type="match status" value="1"/>
</dbReference>
<dbReference type="PANTHER" id="PTHR11063:SF8">
    <property type="entry name" value="DELTA-1-PYRROLINE-5-CARBOXYLATE SYNTHASE"/>
    <property type="match status" value="1"/>
</dbReference>
<dbReference type="PANTHER" id="PTHR11063">
    <property type="entry name" value="GLUTAMATE SEMIALDEHYDE DEHYDROGENASE"/>
    <property type="match status" value="1"/>
</dbReference>
<dbReference type="Pfam" id="PF00171">
    <property type="entry name" value="Aldedh"/>
    <property type="match status" value="1"/>
</dbReference>
<dbReference type="PIRSF" id="PIRSF000151">
    <property type="entry name" value="GPR"/>
    <property type="match status" value="1"/>
</dbReference>
<dbReference type="SUPFAM" id="SSF53720">
    <property type="entry name" value="ALDH-like"/>
    <property type="match status" value="1"/>
</dbReference>
<dbReference type="PROSITE" id="PS01223">
    <property type="entry name" value="PROA"/>
    <property type="match status" value="1"/>
</dbReference>
<gene>
    <name evidence="1" type="primary">proA</name>
    <name type="ordered locus">Mflv_2644</name>
</gene>
<evidence type="ECO:0000255" key="1">
    <source>
        <dbReference type="HAMAP-Rule" id="MF_00412"/>
    </source>
</evidence>
<keyword id="KW-0028">Amino-acid biosynthesis</keyword>
<keyword id="KW-0963">Cytoplasm</keyword>
<keyword id="KW-0521">NADP</keyword>
<keyword id="KW-0560">Oxidoreductase</keyword>
<keyword id="KW-0641">Proline biosynthesis</keyword>